<proteinExistence type="inferred from homology"/>
<organism>
    <name type="scientific">Cronobacter sakazakii (strain ATCC BAA-894)</name>
    <name type="common">Enterobacter sakazakii</name>
    <dbReference type="NCBI Taxonomy" id="290339"/>
    <lineage>
        <taxon>Bacteria</taxon>
        <taxon>Pseudomonadati</taxon>
        <taxon>Pseudomonadota</taxon>
        <taxon>Gammaproteobacteria</taxon>
        <taxon>Enterobacterales</taxon>
        <taxon>Enterobacteriaceae</taxon>
        <taxon>Cronobacter</taxon>
    </lineage>
</organism>
<feature type="chain" id="PRO_1000018026" description="Arginine--tRNA ligase">
    <location>
        <begin position="1"/>
        <end position="577"/>
    </location>
</feature>
<feature type="short sequence motif" description="'HIGH' region">
    <location>
        <begin position="123"/>
        <end position="133"/>
    </location>
</feature>
<name>SYR_CROS8</name>
<sequence length="577" mass="63926">MNIQALLSEKVSQALIAAGAPADCEPQVRQSAKAQFGDYQANGVMAIAKKLGMPPRQFAEQALAHLDLTGIAAKTEIAGPGFINIFLDPAFLAKNIEAAVASDRAGVEKVSAPQTIVVDYSAPNVAKEMHVGHVRSTIIGDASVRTLEFLGHKVIRANHVGDWGTQFGMLIAYLEKQQQENAGEMALSDLEGFYREAKKHYDEDEAFAERARSYVVKLQGGDEYCREMWRKLVDITMTQNQITYQRLNVTLTRDDVMGESLYNPMLPGIVADLKAKGLAVESEGATVVFLDEFKNKEGEPMGVIIQKKDGGYLYTTTDIACAKYRYETLHADRVLYYIDSRQHQHLMQAWTIVRKAGYVPESVPLEHHMFGMMLGKDGKPFKTRAGGTIKLSELLDEALDRARRLVAGKNPDMPADELEKLANAVGIGAVKYADLSKSRTTDYIFDWDNMLAFEGNTAPYMQYAYTRVLSVFRKAGVKESELTAPVVIQDDREAQLAARLLQFEETLGVVARDGTPHVMCAYLYDLAGLFSGFYEHCPILTAETDALRQSRLKLALLTAKTLKLGLDTLGIETVERM</sequence>
<accession>A7MEC0</accession>
<reference key="1">
    <citation type="journal article" date="2010" name="PLoS ONE">
        <title>Genome sequence of Cronobacter sakazakii BAA-894 and comparative genomic hybridization analysis with other Cronobacter species.</title>
        <authorList>
            <person name="Kucerova E."/>
            <person name="Clifton S.W."/>
            <person name="Xia X.Q."/>
            <person name="Long F."/>
            <person name="Porwollik S."/>
            <person name="Fulton L."/>
            <person name="Fronick C."/>
            <person name="Minx P."/>
            <person name="Kyung K."/>
            <person name="Warren W."/>
            <person name="Fulton R."/>
            <person name="Feng D."/>
            <person name="Wollam A."/>
            <person name="Shah N."/>
            <person name="Bhonagiri V."/>
            <person name="Nash W.E."/>
            <person name="Hallsworth-Pepin K."/>
            <person name="Wilson R.K."/>
            <person name="McClelland M."/>
            <person name="Forsythe S.J."/>
        </authorList>
    </citation>
    <scope>NUCLEOTIDE SEQUENCE [LARGE SCALE GENOMIC DNA]</scope>
    <source>
        <strain>ATCC BAA-894</strain>
    </source>
</reference>
<protein>
    <recommendedName>
        <fullName evidence="1">Arginine--tRNA ligase</fullName>
        <ecNumber evidence="1">6.1.1.19</ecNumber>
    </recommendedName>
    <alternativeName>
        <fullName evidence="1">Arginyl-tRNA synthetase</fullName>
        <shortName evidence="1">ArgRS</shortName>
    </alternativeName>
</protein>
<gene>
    <name evidence="1" type="primary">argS</name>
    <name type="ordered locus">ESA_01360</name>
</gene>
<comment type="catalytic activity">
    <reaction evidence="1">
        <text>tRNA(Arg) + L-arginine + ATP = L-arginyl-tRNA(Arg) + AMP + diphosphate</text>
        <dbReference type="Rhea" id="RHEA:20301"/>
        <dbReference type="Rhea" id="RHEA-COMP:9658"/>
        <dbReference type="Rhea" id="RHEA-COMP:9673"/>
        <dbReference type="ChEBI" id="CHEBI:30616"/>
        <dbReference type="ChEBI" id="CHEBI:32682"/>
        <dbReference type="ChEBI" id="CHEBI:33019"/>
        <dbReference type="ChEBI" id="CHEBI:78442"/>
        <dbReference type="ChEBI" id="CHEBI:78513"/>
        <dbReference type="ChEBI" id="CHEBI:456215"/>
        <dbReference type="EC" id="6.1.1.19"/>
    </reaction>
</comment>
<comment type="subunit">
    <text evidence="1">Monomer.</text>
</comment>
<comment type="subcellular location">
    <subcellularLocation>
        <location evidence="1">Cytoplasm</location>
    </subcellularLocation>
</comment>
<comment type="similarity">
    <text evidence="1">Belongs to the class-I aminoacyl-tRNA synthetase family.</text>
</comment>
<evidence type="ECO:0000255" key="1">
    <source>
        <dbReference type="HAMAP-Rule" id="MF_00123"/>
    </source>
</evidence>
<dbReference type="EC" id="6.1.1.19" evidence="1"/>
<dbReference type="EMBL" id="CP000783">
    <property type="protein sequence ID" value="ABU76620.1"/>
    <property type="molecule type" value="Genomic_DNA"/>
</dbReference>
<dbReference type="RefSeq" id="WP_004387403.1">
    <property type="nucleotide sequence ID" value="NC_009778.1"/>
</dbReference>
<dbReference type="SMR" id="A7MEC0"/>
<dbReference type="GeneID" id="56730216"/>
<dbReference type="KEGG" id="esa:ESA_01360"/>
<dbReference type="HOGENOM" id="CLU_006406_5_1_6"/>
<dbReference type="Proteomes" id="UP000000260">
    <property type="component" value="Chromosome"/>
</dbReference>
<dbReference type="GO" id="GO:0005737">
    <property type="term" value="C:cytoplasm"/>
    <property type="evidence" value="ECO:0007669"/>
    <property type="project" value="UniProtKB-SubCell"/>
</dbReference>
<dbReference type="GO" id="GO:0004814">
    <property type="term" value="F:arginine-tRNA ligase activity"/>
    <property type="evidence" value="ECO:0007669"/>
    <property type="project" value="UniProtKB-UniRule"/>
</dbReference>
<dbReference type="GO" id="GO:0005524">
    <property type="term" value="F:ATP binding"/>
    <property type="evidence" value="ECO:0007669"/>
    <property type="project" value="UniProtKB-UniRule"/>
</dbReference>
<dbReference type="GO" id="GO:0006420">
    <property type="term" value="P:arginyl-tRNA aminoacylation"/>
    <property type="evidence" value="ECO:0007669"/>
    <property type="project" value="UniProtKB-UniRule"/>
</dbReference>
<dbReference type="CDD" id="cd07956">
    <property type="entry name" value="Anticodon_Ia_Arg"/>
    <property type="match status" value="1"/>
</dbReference>
<dbReference type="CDD" id="cd00671">
    <property type="entry name" value="ArgRS_core"/>
    <property type="match status" value="1"/>
</dbReference>
<dbReference type="FunFam" id="1.10.730.10:FF:000001">
    <property type="entry name" value="Arginine--tRNA ligase"/>
    <property type="match status" value="1"/>
</dbReference>
<dbReference type="FunFam" id="3.30.1360.70:FF:000001">
    <property type="entry name" value="Arginine--tRNA ligase"/>
    <property type="match status" value="1"/>
</dbReference>
<dbReference type="FunFam" id="3.40.50.620:FF:000030">
    <property type="entry name" value="Arginine--tRNA ligase"/>
    <property type="match status" value="1"/>
</dbReference>
<dbReference type="Gene3D" id="3.30.1360.70">
    <property type="entry name" value="Arginyl tRNA synthetase N-terminal domain"/>
    <property type="match status" value="1"/>
</dbReference>
<dbReference type="Gene3D" id="3.40.50.620">
    <property type="entry name" value="HUPs"/>
    <property type="match status" value="1"/>
</dbReference>
<dbReference type="Gene3D" id="1.10.730.10">
    <property type="entry name" value="Isoleucyl-tRNA Synthetase, Domain 1"/>
    <property type="match status" value="1"/>
</dbReference>
<dbReference type="HAMAP" id="MF_00123">
    <property type="entry name" value="Arg_tRNA_synth"/>
    <property type="match status" value="1"/>
</dbReference>
<dbReference type="InterPro" id="IPR001412">
    <property type="entry name" value="aa-tRNA-synth_I_CS"/>
</dbReference>
<dbReference type="InterPro" id="IPR001278">
    <property type="entry name" value="Arg-tRNA-ligase"/>
</dbReference>
<dbReference type="InterPro" id="IPR005148">
    <property type="entry name" value="Arg-tRNA-synth_N"/>
</dbReference>
<dbReference type="InterPro" id="IPR036695">
    <property type="entry name" value="Arg-tRNA-synth_N_sf"/>
</dbReference>
<dbReference type="InterPro" id="IPR035684">
    <property type="entry name" value="ArgRS_core"/>
</dbReference>
<dbReference type="InterPro" id="IPR008909">
    <property type="entry name" value="DALR_anticod-bd"/>
</dbReference>
<dbReference type="InterPro" id="IPR014729">
    <property type="entry name" value="Rossmann-like_a/b/a_fold"/>
</dbReference>
<dbReference type="InterPro" id="IPR009080">
    <property type="entry name" value="tRNAsynth_Ia_anticodon-bd"/>
</dbReference>
<dbReference type="NCBIfam" id="TIGR00456">
    <property type="entry name" value="argS"/>
    <property type="match status" value="1"/>
</dbReference>
<dbReference type="PANTHER" id="PTHR11956:SF5">
    <property type="entry name" value="ARGININE--TRNA LIGASE, CYTOPLASMIC"/>
    <property type="match status" value="1"/>
</dbReference>
<dbReference type="PANTHER" id="PTHR11956">
    <property type="entry name" value="ARGINYL-TRNA SYNTHETASE"/>
    <property type="match status" value="1"/>
</dbReference>
<dbReference type="Pfam" id="PF03485">
    <property type="entry name" value="Arg_tRNA_synt_N"/>
    <property type="match status" value="1"/>
</dbReference>
<dbReference type="Pfam" id="PF05746">
    <property type="entry name" value="DALR_1"/>
    <property type="match status" value="1"/>
</dbReference>
<dbReference type="Pfam" id="PF00750">
    <property type="entry name" value="tRNA-synt_1d"/>
    <property type="match status" value="1"/>
</dbReference>
<dbReference type="PRINTS" id="PR01038">
    <property type="entry name" value="TRNASYNTHARG"/>
</dbReference>
<dbReference type="SMART" id="SM01016">
    <property type="entry name" value="Arg_tRNA_synt_N"/>
    <property type="match status" value="1"/>
</dbReference>
<dbReference type="SMART" id="SM00836">
    <property type="entry name" value="DALR_1"/>
    <property type="match status" value="1"/>
</dbReference>
<dbReference type="SUPFAM" id="SSF47323">
    <property type="entry name" value="Anticodon-binding domain of a subclass of class I aminoacyl-tRNA synthetases"/>
    <property type="match status" value="1"/>
</dbReference>
<dbReference type="SUPFAM" id="SSF55190">
    <property type="entry name" value="Arginyl-tRNA synthetase (ArgRS), N-terminal 'additional' domain"/>
    <property type="match status" value="1"/>
</dbReference>
<dbReference type="SUPFAM" id="SSF52374">
    <property type="entry name" value="Nucleotidylyl transferase"/>
    <property type="match status" value="1"/>
</dbReference>
<dbReference type="PROSITE" id="PS00178">
    <property type="entry name" value="AA_TRNA_LIGASE_I"/>
    <property type="match status" value="1"/>
</dbReference>
<keyword id="KW-0030">Aminoacyl-tRNA synthetase</keyword>
<keyword id="KW-0067">ATP-binding</keyword>
<keyword id="KW-0963">Cytoplasm</keyword>
<keyword id="KW-0436">Ligase</keyword>
<keyword id="KW-0547">Nucleotide-binding</keyword>
<keyword id="KW-0648">Protein biosynthesis</keyword>
<keyword id="KW-1185">Reference proteome</keyword>